<evidence type="ECO:0000255" key="1">
    <source>
        <dbReference type="HAMAP-Rule" id="MF_03010"/>
    </source>
</evidence>
<evidence type="ECO:0000255" key="2">
    <source>
        <dbReference type="PROSITE-ProRule" id="PRU01185"/>
    </source>
</evidence>
<dbReference type="EMBL" id="CH480824">
    <property type="protein sequence ID" value="EDW56668.1"/>
    <property type="molecule type" value="Genomic_DNA"/>
</dbReference>
<dbReference type="SMR" id="B4I7U3"/>
<dbReference type="STRING" id="7238.B4I7U3"/>
<dbReference type="EnsemblMetazoa" id="FBtr0198840">
    <property type="protein sequence ID" value="FBpp0197332"/>
    <property type="gene ID" value="FBgn0170771"/>
</dbReference>
<dbReference type="EnsemblMetazoa" id="XM_002039767.2">
    <property type="protein sequence ID" value="XP_002039803.1"/>
    <property type="gene ID" value="LOC6615421"/>
</dbReference>
<dbReference type="GeneID" id="6615421"/>
<dbReference type="KEGG" id="dse:6615421"/>
<dbReference type="CTD" id="27335"/>
<dbReference type="HOGENOM" id="CLU_076723_1_0_1"/>
<dbReference type="OMA" id="WKHQGQG"/>
<dbReference type="OrthoDB" id="15697at7215"/>
<dbReference type="PhylomeDB" id="B4I7U3"/>
<dbReference type="Proteomes" id="UP000001292">
    <property type="component" value="Unassembled WGS sequence"/>
</dbReference>
<dbReference type="GO" id="GO:0016282">
    <property type="term" value="C:eukaryotic 43S preinitiation complex"/>
    <property type="evidence" value="ECO:0007669"/>
    <property type="project" value="UniProtKB-UniRule"/>
</dbReference>
<dbReference type="GO" id="GO:0033290">
    <property type="term" value="C:eukaryotic 48S preinitiation complex"/>
    <property type="evidence" value="ECO:0007669"/>
    <property type="project" value="UniProtKB-UniRule"/>
</dbReference>
<dbReference type="GO" id="GO:0005852">
    <property type="term" value="C:eukaryotic translation initiation factor 3 complex"/>
    <property type="evidence" value="ECO:0007669"/>
    <property type="project" value="UniProtKB-UniRule"/>
</dbReference>
<dbReference type="GO" id="GO:0043022">
    <property type="term" value="F:ribosome binding"/>
    <property type="evidence" value="ECO:0007669"/>
    <property type="project" value="InterPro"/>
</dbReference>
<dbReference type="GO" id="GO:0003723">
    <property type="term" value="F:RNA binding"/>
    <property type="evidence" value="ECO:0007669"/>
    <property type="project" value="UniProtKB-UniRule"/>
</dbReference>
<dbReference type="GO" id="GO:0003743">
    <property type="term" value="F:translation initiation factor activity"/>
    <property type="evidence" value="ECO:0007669"/>
    <property type="project" value="UniProtKB-UniRule"/>
</dbReference>
<dbReference type="GO" id="GO:0001732">
    <property type="term" value="P:formation of cytoplasmic translation initiation complex"/>
    <property type="evidence" value="ECO:0007669"/>
    <property type="project" value="UniProtKB-UniRule"/>
</dbReference>
<dbReference type="GO" id="GO:0006446">
    <property type="term" value="P:regulation of translational initiation"/>
    <property type="evidence" value="ECO:0007669"/>
    <property type="project" value="InterPro"/>
</dbReference>
<dbReference type="FunFam" id="1.10.10.10:FF:000212">
    <property type="entry name" value="Eukaryotic translation initiation factor 3 subunit K"/>
    <property type="match status" value="1"/>
</dbReference>
<dbReference type="FunFam" id="1.25.40.250:FF:000001">
    <property type="entry name" value="Eukaryotic translation initiation factor 3 subunit K"/>
    <property type="match status" value="1"/>
</dbReference>
<dbReference type="Gene3D" id="1.25.40.250">
    <property type="entry name" value="ARM repeat, domain 1"/>
    <property type="match status" value="1"/>
</dbReference>
<dbReference type="Gene3D" id="1.10.10.10">
    <property type="entry name" value="Winged helix-like DNA-binding domain superfamily/Winged helix DNA-binding domain"/>
    <property type="match status" value="1"/>
</dbReference>
<dbReference type="HAMAP" id="MF_03010">
    <property type="entry name" value="eIF3k"/>
    <property type="match status" value="1"/>
</dbReference>
<dbReference type="InterPro" id="IPR016024">
    <property type="entry name" value="ARM-type_fold"/>
</dbReference>
<dbReference type="InterPro" id="IPR033464">
    <property type="entry name" value="CSN8_PSD8_EIF3K"/>
</dbReference>
<dbReference type="InterPro" id="IPR009374">
    <property type="entry name" value="eIF3k"/>
</dbReference>
<dbReference type="InterPro" id="IPR000717">
    <property type="entry name" value="PCI_dom"/>
</dbReference>
<dbReference type="InterPro" id="IPR016020">
    <property type="entry name" value="Transl_init_fac_sub12_N_euk"/>
</dbReference>
<dbReference type="InterPro" id="IPR036388">
    <property type="entry name" value="WH-like_DNA-bd_sf"/>
</dbReference>
<dbReference type="InterPro" id="IPR036390">
    <property type="entry name" value="WH_DNA-bd_sf"/>
</dbReference>
<dbReference type="PANTHER" id="PTHR13022">
    <property type="entry name" value="EUKARYOTIC TRANSLATION INITIATION FACTOR 3 SUBUNIT 11"/>
    <property type="match status" value="1"/>
</dbReference>
<dbReference type="PANTHER" id="PTHR13022:SF0">
    <property type="entry name" value="EUKARYOTIC TRANSLATION INITIATION FACTOR 3 SUBUNIT K"/>
    <property type="match status" value="1"/>
</dbReference>
<dbReference type="Pfam" id="PF10075">
    <property type="entry name" value="CSN8_PSD8_EIF3K"/>
    <property type="match status" value="1"/>
</dbReference>
<dbReference type="SUPFAM" id="SSF48371">
    <property type="entry name" value="ARM repeat"/>
    <property type="match status" value="1"/>
</dbReference>
<dbReference type="SUPFAM" id="SSF46785">
    <property type="entry name" value="Winged helix' DNA-binding domain"/>
    <property type="match status" value="1"/>
</dbReference>
<dbReference type="PROSITE" id="PS50250">
    <property type="entry name" value="PCI"/>
    <property type="match status" value="1"/>
</dbReference>
<sequence>MSHLVKMENGQSQTIQEMLGCIERYNPDHLKTLESYVQDQAKNNTYDLEANLAVLKLYQFNPHMLNFDITYTILLKSLTSLPHTDFVMAKCLLLPQQMKDENVQTIIDLADILERADFTLFWQRAEVNRNMFRHIAGFHDSIRKFVSHVVGTTFQTIRKDLLKELLGGIEDSTLESWIKRNGWKNQGQGLVIVAMQDDKIKTKNITEKIEFDNVGALMAQCL</sequence>
<reference key="1">
    <citation type="journal article" date="2007" name="Nature">
        <title>Evolution of genes and genomes on the Drosophila phylogeny.</title>
        <authorList>
            <consortium name="Drosophila 12 genomes consortium"/>
        </authorList>
    </citation>
    <scope>NUCLEOTIDE SEQUENCE [LARGE SCALE GENOMIC DNA]</scope>
    <source>
        <strain>Rob3c / Tucson 14021-0248.25</strain>
    </source>
</reference>
<protein>
    <recommendedName>
        <fullName evidence="1">Eukaryotic translation initiation factor 3 subunit K</fullName>
        <shortName evidence="1">eIF3k</shortName>
    </recommendedName>
    <alternativeName>
        <fullName evidence="1">eIF-3 p25</fullName>
    </alternativeName>
</protein>
<gene>
    <name type="ORF">GM15855</name>
</gene>
<name>EIF3K_DROSE</name>
<comment type="function">
    <text evidence="1">Component of the eukaryotic translation initiation factor 3 (eIF-3) complex, which is involved in protein synthesis of a specialized repertoire of mRNAs and, together with other initiation factors, stimulates binding of mRNA and methionyl-tRNAi to the 40S ribosome. The eIF-3 complex specifically targets and initiates translation of a subset of mRNAs involved in cell proliferation.</text>
</comment>
<comment type="subunit">
    <text evidence="1">Component of the eukaryotic translation initiation factor 3 (eIF-3) complex. The eIF-3 complex interacts with pix.</text>
</comment>
<comment type="subcellular location">
    <subcellularLocation>
        <location evidence="1">Cytoplasm</location>
    </subcellularLocation>
</comment>
<comment type="similarity">
    <text evidence="1">Belongs to the eIF-3 subunit K family.</text>
</comment>
<proteinExistence type="inferred from homology"/>
<keyword id="KW-0963">Cytoplasm</keyword>
<keyword id="KW-0396">Initiation factor</keyword>
<keyword id="KW-0648">Protein biosynthesis</keyword>
<keyword id="KW-1185">Reference proteome</keyword>
<organism>
    <name type="scientific">Drosophila sechellia</name>
    <name type="common">Fruit fly</name>
    <dbReference type="NCBI Taxonomy" id="7238"/>
    <lineage>
        <taxon>Eukaryota</taxon>
        <taxon>Metazoa</taxon>
        <taxon>Ecdysozoa</taxon>
        <taxon>Arthropoda</taxon>
        <taxon>Hexapoda</taxon>
        <taxon>Insecta</taxon>
        <taxon>Pterygota</taxon>
        <taxon>Neoptera</taxon>
        <taxon>Endopterygota</taxon>
        <taxon>Diptera</taxon>
        <taxon>Brachycera</taxon>
        <taxon>Muscomorpha</taxon>
        <taxon>Ephydroidea</taxon>
        <taxon>Drosophilidae</taxon>
        <taxon>Drosophila</taxon>
        <taxon>Sophophora</taxon>
    </lineage>
</organism>
<feature type="chain" id="PRO_0000365046" description="Eukaryotic translation initiation factor 3 subunit K">
    <location>
        <begin position="1"/>
        <end position="222"/>
    </location>
</feature>
<feature type="domain" description="PCI" evidence="2">
    <location>
        <begin position="46"/>
        <end position="208"/>
    </location>
</feature>
<accession>B4I7U3</accession>